<proteinExistence type="evidence at protein level"/>
<protein>
    <recommendedName>
        <fullName>Phosphoenolpyruvate phosphomutase</fullName>
        <shortName>PEP mutase</shortName>
        <shortName>PEP phosphomutase</shortName>
        <shortName>Phosphoenolpyruvate mutase</shortName>
        <ecNumber>5.4.2.9</ecNumber>
    </recommendedName>
</protein>
<gene>
    <name type="primary">PEPM</name>
</gene>
<dbReference type="EC" id="5.4.2.9"/>
<dbReference type="EMBL" id="M85236">
    <property type="protein sequence ID" value="AAA30123.1"/>
    <property type="molecule type" value="Genomic_DNA"/>
</dbReference>
<dbReference type="PIR" id="A42204">
    <property type="entry name" value="A42204"/>
</dbReference>
<dbReference type="SMR" id="P33182"/>
<dbReference type="KEGG" id="ag:AAA30123"/>
<dbReference type="BioCyc" id="MetaCyc:MONOMER-16742"/>
<dbReference type="UniPathway" id="UPA00960"/>
<dbReference type="GO" id="GO:0050188">
    <property type="term" value="F:phosphoenolpyruvate mutase activity"/>
    <property type="evidence" value="ECO:0007669"/>
    <property type="project" value="UniProtKB-EC"/>
</dbReference>
<dbReference type="GO" id="GO:0032923">
    <property type="term" value="P:organic phosphonate biosynthetic process"/>
    <property type="evidence" value="ECO:0007669"/>
    <property type="project" value="UniProtKB-UniPathway"/>
</dbReference>
<dbReference type="CDD" id="cd00377">
    <property type="entry name" value="ICL_PEPM"/>
    <property type="match status" value="1"/>
</dbReference>
<dbReference type="Gene3D" id="3.20.20.60">
    <property type="entry name" value="Phosphoenolpyruvate-binding domains"/>
    <property type="match status" value="1"/>
</dbReference>
<dbReference type="InterPro" id="IPR039556">
    <property type="entry name" value="ICL/PEPM"/>
</dbReference>
<dbReference type="InterPro" id="IPR012698">
    <property type="entry name" value="PEnolPyrv_PMutase_core"/>
</dbReference>
<dbReference type="InterPro" id="IPR015813">
    <property type="entry name" value="Pyrv/PenolPyrv_kinase-like_dom"/>
</dbReference>
<dbReference type="InterPro" id="IPR040442">
    <property type="entry name" value="Pyrv_kinase-like_dom_sf"/>
</dbReference>
<dbReference type="NCBIfam" id="TIGR02320">
    <property type="entry name" value="PEP_mutase"/>
    <property type="match status" value="1"/>
</dbReference>
<dbReference type="PANTHER" id="PTHR42905">
    <property type="entry name" value="PHOSPHOENOLPYRUVATE CARBOXYLASE"/>
    <property type="match status" value="1"/>
</dbReference>
<dbReference type="PANTHER" id="PTHR42905:SF7">
    <property type="entry name" value="PHOSPHOENOLPYRUVATE PHOSPHOMUTASE"/>
    <property type="match status" value="1"/>
</dbReference>
<dbReference type="Pfam" id="PF13714">
    <property type="entry name" value="PEP_mutase"/>
    <property type="match status" value="1"/>
</dbReference>
<dbReference type="SUPFAM" id="SSF51621">
    <property type="entry name" value="Phosphoenolpyruvate/pyruvate domain"/>
    <property type="match status" value="1"/>
</dbReference>
<keyword id="KW-0903">Direct protein sequencing</keyword>
<keyword id="KW-0413">Isomerase</keyword>
<sequence length="300" mass="33849">MLANSLKSFFSSTRKTTQLKNMIQSKDLSFIMEAHNGLSAAIVEETGFKGIWGSGLSISAAMGVRDSNEASYTQVLEVLEFMSDRTKIPILLDGDTGYGNYNNARRLVKKLEQRSIAGVCLEDKIFPKRNSLLDDGRQELAPINEFVAKIKACKDTQQDADFQVVARVEAFIAGWGLEEALKRAEAYRNAGADAILMHSKLKEPSEIEAFMKEWKNRSPVIIVPTNYHTVPTDTFRKWGVNMVIWANHNMRACVSAMQETSRRIYEDESLVNVEPKVAKVKEVFRLQGEDELKQADKKYL</sequence>
<reference key="1">
    <citation type="journal article" date="1992" name="Biochemistry">
        <title>Phosphonate biosynthesis: molecular cloning of the gene for phosphoenolpyruvate mutase from Tetrahymena pyriformis and overexpression of the gene product in Escherichia coli.</title>
        <authorList>
            <person name="Seidel H.M."/>
            <person name="Pompliano D.L."/>
            <person name="Knowles J.R."/>
        </authorList>
    </citation>
    <scope>NUCLEOTIDE SEQUENCE [GENOMIC DNA]</scope>
    <source>
        <strain>ATCC 30331 / GL</strain>
    </source>
</reference>
<reference key="2">
    <citation type="journal article" date="1988" name="Nature">
        <title>Phosphonate biosynthesis: isolation of the enzyme responsible for the formation of a carbon-phosphorus bond.</title>
        <authorList>
            <person name="Seidel H.M."/>
            <person name="Freeman S."/>
            <person name="Seto H."/>
            <person name="Knowles J.R."/>
        </authorList>
    </citation>
    <scope>PROTEIN SEQUENCE OF 11-40</scope>
</reference>
<accession>P33182</accession>
<name>PEPM_TETPY</name>
<organism>
    <name type="scientific">Tetrahymena pyriformis</name>
    <dbReference type="NCBI Taxonomy" id="5908"/>
    <lineage>
        <taxon>Eukaryota</taxon>
        <taxon>Sar</taxon>
        <taxon>Alveolata</taxon>
        <taxon>Ciliophora</taxon>
        <taxon>Intramacronucleata</taxon>
        <taxon>Oligohymenophorea</taxon>
        <taxon>Hymenostomatida</taxon>
        <taxon>Tetrahymenina</taxon>
        <taxon>Tetrahymenidae</taxon>
        <taxon>Tetrahymena</taxon>
    </lineage>
</organism>
<comment type="function">
    <text>Formation of a carbon-phosphorus bond by converting phosphoenolpyruvate (PEP) to phosphonopyruvate (P-Pyr).</text>
</comment>
<comment type="catalytic activity">
    <reaction>
        <text>phosphoenolpyruvate + H(+) = 3-phosphonopyruvate</text>
        <dbReference type="Rhea" id="RHEA:17013"/>
        <dbReference type="ChEBI" id="CHEBI:15378"/>
        <dbReference type="ChEBI" id="CHEBI:58702"/>
        <dbReference type="ChEBI" id="CHEBI:71402"/>
        <dbReference type="EC" id="5.4.2.9"/>
    </reaction>
</comment>
<comment type="pathway">
    <text>Phosphorus metabolism; phosphonate biosynthesis.</text>
</comment>
<comment type="similarity">
    <text evidence="2">Belongs to the isocitrate lyase/PEP mutase superfamily. PEP mutase family.</text>
</comment>
<evidence type="ECO:0000255" key="1"/>
<evidence type="ECO:0000305" key="2"/>
<feature type="propeptide" id="PRO_0000014458" evidence="1">
    <location>
        <begin position="1"/>
        <end position="10"/>
    </location>
</feature>
<feature type="chain" id="PRO_0000014459" description="Phosphoenolpyruvate phosphomutase">
    <location>
        <begin position="11"/>
        <end position="300"/>
    </location>
</feature>
<feature type="active site" description="Nucleophile" evidence="1">
    <location>
        <position position="66"/>
    </location>
</feature>